<organism>
    <name type="scientific">Chlamydia muridarum (strain MoPn / Nigg)</name>
    <dbReference type="NCBI Taxonomy" id="243161"/>
    <lineage>
        <taxon>Bacteria</taxon>
        <taxon>Pseudomonadati</taxon>
        <taxon>Chlamydiota</taxon>
        <taxon>Chlamydiia</taxon>
        <taxon>Chlamydiales</taxon>
        <taxon>Chlamydiaceae</taxon>
        <taxon>Chlamydia/Chlamydophila group</taxon>
        <taxon>Chlamydia</taxon>
    </lineage>
</organism>
<feature type="chain" id="PRO_0000149830" description="Diaminopimelate epimerase">
    <location>
        <begin position="1"/>
        <end position="269"/>
    </location>
</feature>
<feature type="active site" description="Proton donor" evidence="1">
    <location>
        <position position="72"/>
    </location>
</feature>
<feature type="active site" description="Proton acceptor" evidence="1">
    <location>
        <position position="207"/>
    </location>
</feature>
<feature type="binding site" evidence="1">
    <location>
        <position position="20"/>
    </location>
    <ligand>
        <name>substrate</name>
    </ligand>
</feature>
<feature type="binding site" evidence="1">
    <location>
        <position position="63"/>
    </location>
    <ligand>
        <name>substrate</name>
    </ligand>
</feature>
<feature type="binding site" evidence="1">
    <location>
        <begin position="73"/>
        <end position="74"/>
    </location>
    <ligand>
        <name>substrate</name>
    </ligand>
</feature>
<feature type="binding site" evidence="1">
    <location>
        <position position="179"/>
    </location>
    <ligand>
        <name>substrate</name>
    </ligand>
</feature>
<feature type="binding site" evidence="1">
    <location>
        <begin position="197"/>
        <end position="198"/>
    </location>
    <ligand>
        <name>substrate</name>
    </ligand>
</feature>
<feature type="binding site" evidence="1">
    <location>
        <begin position="208"/>
        <end position="209"/>
    </location>
    <ligand>
        <name>substrate</name>
    </ligand>
</feature>
<feature type="site" description="Could be important to modulate the pK values of the two catalytic cysteine residues" evidence="1">
    <location>
        <position position="147"/>
    </location>
</feature>
<feature type="site" description="Could be important to modulate the pK values of the two catalytic cysteine residues" evidence="1">
    <location>
        <position position="197"/>
    </location>
</feature>
<keyword id="KW-0028">Amino-acid biosynthesis</keyword>
<keyword id="KW-0963">Cytoplasm</keyword>
<keyword id="KW-0413">Isomerase</keyword>
<keyword id="KW-0457">Lysine biosynthesis</keyword>
<proteinExistence type="inferred from homology"/>
<evidence type="ECO:0000255" key="1">
    <source>
        <dbReference type="HAMAP-Rule" id="MF_00197"/>
    </source>
</evidence>
<dbReference type="EC" id="5.1.1.7" evidence="1"/>
<dbReference type="EMBL" id="AE002160">
    <property type="protein sequence ID" value="AAF73596.1"/>
    <property type="molecule type" value="Genomic_DNA"/>
</dbReference>
<dbReference type="RefSeq" id="WP_010231302.1">
    <property type="nucleotide sequence ID" value="NZ_CP027217.1"/>
</dbReference>
<dbReference type="SMR" id="Q9PJW2"/>
<dbReference type="GeneID" id="1246077"/>
<dbReference type="KEGG" id="cmu:TC_0714"/>
<dbReference type="eggNOG" id="COG0253">
    <property type="taxonomic scope" value="Bacteria"/>
</dbReference>
<dbReference type="HOGENOM" id="CLU_053306_3_2_0"/>
<dbReference type="OrthoDB" id="9805408at2"/>
<dbReference type="UniPathway" id="UPA00034">
    <property type="reaction ID" value="UER00025"/>
</dbReference>
<dbReference type="Proteomes" id="UP000000800">
    <property type="component" value="Chromosome"/>
</dbReference>
<dbReference type="GO" id="GO:0005829">
    <property type="term" value="C:cytosol"/>
    <property type="evidence" value="ECO:0007669"/>
    <property type="project" value="TreeGrafter"/>
</dbReference>
<dbReference type="GO" id="GO:0008837">
    <property type="term" value="F:diaminopimelate epimerase activity"/>
    <property type="evidence" value="ECO:0007669"/>
    <property type="project" value="UniProtKB-UniRule"/>
</dbReference>
<dbReference type="GO" id="GO:0009089">
    <property type="term" value="P:lysine biosynthetic process via diaminopimelate"/>
    <property type="evidence" value="ECO:0007669"/>
    <property type="project" value="UniProtKB-UniRule"/>
</dbReference>
<dbReference type="Gene3D" id="3.10.310.10">
    <property type="entry name" value="Diaminopimelate Epimerase, Chain A, domain 1"/>
    <property type="match status" value="2"/>
</dbReference>
<dbReference type="HAMAP" id="MF_00197">
    <property type="entry name" value="DAP_epimerase"/>
    <property type="match status" value="1"/>
</dbReference>
<dbReference type="InterPro" id="IPR053407">
    <property type="entry name" value="DAP_Epimerase"/>
</dbReference>
<dbReference type="InterPro" id="IPR018510">
    <property type="entry name" value="DAP_epimerase_AS"/>
</dbReference>
<dbReference type="InterPro" id="IPR001653">
    <property type="entry name" value="DAP_epimerase_DapF"/>
</dbReference>
<dbReference type="NCBIfam" id="NF038284">
    <property type="entry name" value="bifunc_DapF"/>
    <property type="match status" value="1"/>
</dbReference>
<dbReference type="NCBIfam" id="TIGR00652">
    <property type="entry name" value="DapF"/>
    <property type="match status" value="1"/>
</dbReference>
<dbReference type="PANTHER" id="PTHR31689:SF0">
    <property type="entry name" value="DIAMINOPIMELATE EPIMERASE"/>
    <property type="match status" value="1"/>
</dbReference>
<dbReference type="PANTHER" id="PTHR31689">
    <property type="entry name" value="DIAMINOPIMELATE EPIMERASE, CHLOROPLASTIC"/>
    <property type="match status" value="1"/>
</dbReference>
<dbReference type="Pfam" id="PF01678">
    <property type="entry name" value="DAP_epimerase"/>
    <property type="match status" value="2"/>
</dbReference>
<dbReference type="SUPFAM" id="SSF54506">
    <property type="entry name" value="Diaminopimelate epimerase-like"/>
    <property type="match status" value="2"/>
</dbReference>
<dbReference type="PROSITE" id="PS01326">
    <property type="entry name" value="DAP_EPIMERASE"/>
    <property type="match status" value="1"/>
</dbReference>
<sequence>MGSFSPLMTYRYHLYSGTGNSFILGEFIPPLQHIVFLCQKEKVDGFLCVEPSEIADAKLTIFNSDGSEASMCGNGLRCVMAHVAQSLGLEDVSIETVRGVYQGKFFSMDRVLVDMTLLDWKKTKKTLTHVLPGMPEEVFFIDTGVPHVVVFVPDVNKVPVQEWGAFLRYHEDFRPNGVNVDFVQTKKEDTLLVYTYERGCERETLSCGTGMLASALVAADVFSLEQDFSLLVCSRSGNIVKIFSENGKVFLEGPVTLLNCSENIGEFAP</sequence>
<name>DAPF_CHLMU</name>
<accession>Q9PJW2</accession>
<comment type="function">
    <text evidence="1">Catalyzes the stereoinversion of LL-2,6-diaminopimelate (L,L-DAP) to meso-diaminopimelate (meso-DAP), a precursor of L-lysine and an essential component of the bacterial peptidoglycan.</text>
</comment>
<comment type="catalytic activity">
    <reaction evidence="1">
        <text>(2S,6S)-2,6-diaminopimelate = meso-2,6-diaminopimelate</text>
        <dbReference type="Rhea" id="RHEA:15393"/>
        <dbReference type="ChEBI" id="CHEBI:57609"/>
        <dbReference type="ChEBI" id="CHEBI:57791"/>
        <dbReference type="EC" id="5.1.1.7"/>
    </reaction>
</comment>
<comment type="pathway">
    <text evidence="1">Amino-acid biosynthesis; L-lysine biosynthesis via DAP pathway; DL-2,6-diaminopimelate from LL-2,6-diaminopimelate: step 1/1.</text>
</comment>
<comment type="subunit">
    <text evidence="1">Homodimer.</text>
</comment>
<comment type="subcellular location">
    <subcellularLocation>
        <location evidence="1">Cytoplasm</location>
    </subcellularLocation>
</comment>
<comment type="similarity">
    <text evidence="1">Belongs to the diaminopimelate epimerase family.</text>
</comment>
<gene>
    <name evidence="1" type="primary">dapF</name>
    <name type="ordered locus">TC_0714</name>
</gene>
<reference key="1">
    <citation type="journal article" date="2000" name="Nucleic Acids Res.">
        <title>Genome sequences of Chlamydia trachomatis MoPn and Chlamydia pneumoniae AR39.</title>
        <authorList>
            <person name="Read T.D."/>
            <person name="Brunham R.C."/>
            <person name="Shen C."/>
            <person name="Gill S.R."/>
            <person name="Heidelberg J.F."/>
            <person name="White O."/>
            <person name="Hickey E.K."/>
            <person name="Peterson J.D."/>
            <person name="Utterback T.R."/>
            <person name="Berry K.J."/>
            <person name="Bass S."/>
            <person name="Linher K.D."/>
            <person name="Weidman J.F."/>
            <person name="Khouri H.M."/>
            <person name="Craven B."/>
            <person name="Bowman C."/>
            <person name="Dodson R.J."/>
            <person name="Gwinn M.L."/>
            <person name="Nelson W.C."/>
            <person name="DeBoy R.T."/>
            <person name="Kolonay J.F."/>
            <person name="McClarty G."/>
            <person name="Salzberg S.L."/>
            <person name="Eisen J.A."/>
            <person name="Fraser C.M."/>
        </authorList>
    </citation>
    <scope>NUCLEOTIDE SEQUENCE [LARGE SCALE GENOMIC DNA]</scope>
    <source>
        <strain>MoPn / Nigg</strain>
    </source>
</reference>
<protein>
    <recommendedName>
        <fullName evidence="1">Diaminopimelate epimerase</fullName>
        <shortName evidence="1">DAP epimerase</shortName>
        <ecNumber evidence="1">5.1.1.7</ecNumber>
    </recommendedName>
    <alternativeName>
        <fullName evidence="1">PLP-independent amino acid racemase</fullName>
    </alternativeName>
</protein>